<reference key="1">
    <citation type="journal article" date="2006" name="J. Bacteriol.">
        <title>Genome sequence of Aeromonas hydrophila ATCC 7966T: jack of all trades.</title>
        <authorList>
            <person name="Seshadri R."/>
            <person name="Joseph S.W."/>
            <person name="Chopra A.K."/>
            <person name="Sha J."/>
            <person name="Shaw J."/>
            <person name="Graf J."/>
            <person name="Haft D.H."/>
            <person name="Wu M."/>
            <person name="Ren Q."/>
            <person name="Rosovitz M.J."/>
            <person name="Madupu R."/>
            <person name="Tallon L."/>
            <person name="Kim M."/>
            <person name="Jin S."/>
            <person name="Vuong H."/>
            <person name="Stine O.C."/>
            <person name="Ali A."/>
            <person name="Horneman A.J."/>
            <person name="Heidelberg J.F."/>
        </authorList>
    </citation>
    <scope>NUCLEOTIDE SEQUENCE [LARGE SCALE GENOMIC DNA]</scope>
    <source>
        <strain>ATCC 7966 / DSM 30187 / BCRC 13018 / CCUG 14551 / JCM 1027 / KCTC 2358 / NCIMB 9240 / NCTC 8049</strain>
    </source>
</reference>
<feature type="chain" id="PRO_1000082834" description="ATP-dependent RNA helicase RhlB">
    <location>
        <begin position="1"/>
        <end position="429"/>
    </location>
</feature>
<feature type="domain" description="Helicase ATP-binding" evidence="1">
    <location>
        <begin position="40"/>
        <end position="219"/>
    </location>
</feature>
<feature type="domain" description="Helicase C-terminal" evidence="1">
    <location>
        <begin position="243"/>
        <end position="390"/>
    </location>
</feature>
<feature type="region of interest" description="Disordered" evidence="2">
    <location>
        <begin position="399"/>
        <end position="429"/>
    </location>
</feature>
<feature type="short sequence motif" description="Q motif">
    <location>
        <begin position="9"/>
        <end position="37"/>
    </location>
</feature>
<feature type="short sequence motif" description="DEAD box">
    <location>
        <begin position="165"/>
        <end position="168"/>
    </location>
</feature>
<feature type="binding site" evidence="1">
    <location>
        <begin position="53"/>
        <end position="60"/>
    </location>
    <ligand>
        <name>ATP</name>
        <dbReference type="ChEBI" id="CHEBI:30616"/>
    </ligand>
</feature>
<evidence type="ECO:0000255" key="1">
    <source>
        <dbReference type="HAMAP-Rule" id="MF_00661"/>
    </source>
</evidence>
<evidence type="ECO:0000256" key="2">
    <source>
        <dbReference type="SAM" id="MobiDB-lite"/>
    </source>
</evidence>
<comment type="function">
    <text evidence="1">DEAD-box RNA helicase involved in RNA degradation. Has RNA-dependent ATPase activity and unwinds double-stranded RNA.</text>
</comment>
<comment type="catalytic activity">
    <reaction evidence="1">
        <text>ATP + H2O = ADP + phosphate + H(+)</text>
        <dbReference type="Rhea" id="RHEA:13065"/>
        <dbReference type="ChEBI" id="CHEBI:15377"/>
        <dbReference type="ChEBI" id="CHEBI:15378"/>
        <dbReference type="ChEBI" id="CHEBI:30616"/>
        <dbReference type="ChEBI" id="CHEBI:43474"/>
        <dbReference type="ChEBI" id="CHEBI:456216"/>
        <dbReference type="EC" id="3.6.4.13"/>
    </reaction>
</comment>
<comment type="subunit">
    <text evidence="1">Component of the RNA degradosome, which is a multiprotein complex involved in RNA processing and mRNA degradation.</text>
</comment>
<comment type="subcellular location">
    <subcellularLocation>
        <location evidence="1">Cytoplasm</location>
    </subcellularLocation>
</comment>
<comment type="similarity">
    <text evidence="1">Belongs to the DEAD box helicase family. RhlB subfamily.</text>
</comment>
<keyword id="KW-0067">ATP-binding</keyword>
<keyword id="KW-0963">Cytoplasm</keyword>
<keyword id="KW-0347">Helicase</keyword>
<keyword id="KW-0378">Hydrolase</keyword>
<keyword id="KW-0547">Nucleotide-binding</keyword>
<keyword id="KW-1185">Reference proteome</keyword>
<keyword id="KW-0694">RNA-binding</keyword>
<accession>A0KEG9</accession>
<protein>
    <recommendedName>
        <fullName evidence="1">ATP-dependent RNA helicase RhlB</fullName>
        <ecNumber evidence="1">3.6.4.13</ecNumber>
    </recommendedName>
</protein>
<dbReference type="EC" id="3.6.4.13" evidence="1"/>
<dbReference type="EMBL" id="CP000462">
    <property type="protein sequence ID" value="ABK39109.1"/>
    <property type="molecule type" value="Genomic_DNA"/>
</dbReference>
<dbReference type="RefSeq" id="WP_011704129.1">
    <property type="nucleotide sequence ID" value="NC_008570.1"/>
</dbReference>
<dbReference type="RefSeq" id="YP_854622.1">
    <property type="nucleotide sequence ID" value="NC_008570.1"/>
</dbReference>
<dbReference type="SMR" id="A0KEG9"/>
<dbReference type="STRING" id="380703.AHA_0097"/>
<dbReference type="EnsemblBacteria" id="ABK39109">
    <property type="protein sequence ID" value="ABK39109"/>
    <property type="gene ID" value="AHA_0097"/>
</dbReference>
<dbReference type="GeneID" id="4490992"/>
<dbReference type="KEGG" id="aha:AHA_0097"/>
<dbReference type="PATRIC" id="fig|380703.7.peg.89"/>
<dbReference type="eggNOG" id="COG0513">
    <property type="taxonomic scope" value="Bacteria"/>
</dbReference>
<dbReference type="HOGENOM" id="CLU_003041_28_3_6"/>
<dbReference type="OrthoDB" id="8520957at2"/>
<dbReference type="Proteomes" id="UP000000756">
    <property type="component" value="Chromosome"/>
</dbReference>
<dbReference type="GO" id="GO:0005829">
    <property type="term" value="C:cytosol"/>
    <property type="evidence" value="ECO:0007669"/>
    <property type="project" value="TreeGrafter"/>
</dbReference>
<dbReference type="GO" id="GO:0005524">
    <property type="term" value="F:ATP binding"/>
    <property type="evidence" value="ECO:0007669"/>
    <property type="project" value="UniProtKB-UniRule"/>
</dbReference>
<dbReference type="GO" id="GO:0016887">
    <property type="term" value="F:ATP hydrolysis activity"/>
    <property type="evidence" value="ECO:0007669"/>
    <property type="project" value="RHEA"/>
</dbReference>
<dbReference type="GO" id="GO:0003723">
    <property type="term" value="F:RNA binding"/>
    <property type="evidence" value="ECO:0007669"/>
    <property type="project" value="UniProtKB-UniRule"/>
</dbReference>
<dbReference type="GO" id="GO:0003724">
    <property type="term" value="F:RNA helicase activity"/>
    <property type="evidence" value="ECO:0007669"/>
    <property type="project" value="UniProtKB-UniRule"/>
</dbReference>
<dbReference type="GO" id="GO:0006401">
    <property type="term" value="P:RNA catabolic process"/>
    <property type="evidence" value="ECO:0007669"/>
    <property type="project" value="UniProtKB-UniRule"/>
</dbReference>
<dbReference type="CDD" id="cd00268">
    <property type="entry name" value="DEADc"/>
    <property type="match status" value="1"/>
</dbReference>
<dbReference type="CDD" id="cd18787">
    <property type="entry name" value="SF2_C_DEAD"/>
    <property type="match status" value="1"/>
</dbReference>
<dbReference type="FunFam" id="3.40.50.300:FF:000312">
    <property type="entry name" value="ATP-dependent RNA helicase RhlB"/>
    <property type="match status" value="1"/>
</dbReference>
<dbReference type="Gene3D" id="3.40.50.300">
    <property type="entry name" value="P-loop containing nucleotide triphosphate hydrolases"/>
    <property type="match status" value="2"/>
</dbReference>
<dbReference type="HAMAP" id="MF_00661">
    <property type="entry name" value="DEAD_helicase_RhlB"/>
    <property type="match status" value="1"/>
</dbReference>
<dbReference type="InterPro" id="IPR011545">
    <property type="entry name" value="DEAD/DEAH_box_helicase_dom"/>
</dbReference>
<dbReference type="InterPro" id="IPR050079">
    <property type="entry name" value="DEAD_box_RNA_helicase"/>
</dbReference>
<dbReference type="InterPro" id="IPR014001">
    <property type="entry name" value="Helicase_ATP-bd"/>
</dbReference>
<dbReference type="InterPro" id="IPR001650">
    <property type="entry name" value="Helicase_C-like"/>
</dbReference>
<dbReference type="InterPro" id="IPR027417">
    <property type="entry name" value="P-loop_NTPase"/>
</dbReference>
<dbReference type="InterPro" id="IPR000629">
    <property type="entry name" value="RNA-helicase_DEAD-box_CS"/>
</dbReference>
<dbReference type="InterPro" id="IPR023554">
    <property type="entry name" value="RNA_helicase_ATP-dep_RhlB"/>
</dbReference>
<dbReference type="InterPro" id="IPR014014">
    <property type="entry name" value="RNA_helicase_DEAD_Q_motif"/>
</dbReference>
<dbReference type="NCBIfam" id="NF003419">
    <property type="entry name" value="PRK04837.1"/>
    <property type="match status" value="1"/>
</dbReference>
<dbReference type="PANTHER" id="PTHR47959:SF10">
    <property type="entry name" value="ATP-DEPENDENT RNA HELICASE RHLB"/>
    <property type="match status" value="1"/>
</dbReference>
<dbReference type="PANTHER" id="PTHR47959">
    <property type="entry name" value="ATP-DEPENDENT RNA HELICASE RHLE-RELATED"/>
    <property type="match status" value="1"/>
</dbReference>
<dbReference type="Pfam" id="PF00270">
    <property type="entry name" value="DEAD"/>
    <property type="match status" value="1"/>
</dbReference>
<dbReference type="Pfam" id="PF00271">
    <property type="entry name" value="Helicase_C"/>
    <property type="match status" value="1"/>
</dbReference>
<dbReference type="SMART" id="SM00487">
    <property type="entry name" value="DEXDc"/>
    <property type="match status" value="1"/>
</dbReference>
<dbReference type="SMART" id="SM00490">
    <property type="entry name" value="HELICc"/>
    <property type="match status" value="1"/>
</dbReference>
<dbReference type="SUPFAM" id="SSF52540">
    <property type="entry name" value="P-loop containing nucleoside triphosphate hydrolases"/>
    <property type="match status" value="1"/>
</dbReference>
<dbReference type="PROSITE" id="PS00039">
    <property type="entry name" value="DEAD_ATP_HELICASE"/>
    <property type="match status" value="1"/>
</dbReference>
<dbReference type="PROSITE" id="PS51192">
    <property type="entry name" value="HELICASE_ATP_BIND_1"/>
    <property type="match status" value="1"/>
</dbReference>
<dbReference type="PROSITE" id="PS51194">
    <property type="entry name" value="HELICASE_CTER"/>
    <property type="match status" value="1"/>
</dbReference>
<dbReference type="PROSITE" id="PS51195">
    <property type="entry name" value="Q_MOTIF"/>
    <property type="match status" value="1"/>
</dbReference>
<name>RHLB_AERHH</name>
<proteinExistence type="inferred from homology"/>
<organism>
    <name type="scientific">Aeromonas hydrophila subsp. hydrophila (strain ATCC 7966 / DSM 30187 / BCRC 13018 / CCUG 14551 / JCM 1027 / KCTC 2358 / NCIMB 9240 / NCTC 8049)</name>
    <dbReference type="NCBI Taxonomy" id="380703"/>
    <lineage>
        <taxon>Bacteria</taxon>
        <taxon>Pseudomonadati</taxon>
        <taxon>Pseudomonadota</taxon>
        <taxon>Gammaproteobacteria</taxon>
        <taxon>Aeromonadales</taxon>
        <taxon>Aeromonadaceae</taxon>
        <taxon>Aeromonas</taxon>
    </lineage>
</organism>
<gene>
    <name evidence="1" type="primary">rhlB</name>
    <name type="ordered locus">AHA_0097</name>
</gene>
<sequence>MSKTHLTTDKFAQMGLEPEVLAGLESKGFHYCTPIQALSLPLLVEGHDLAGQAQTGTGKTLAFLAATFNYLLTHPLTKPRLINQPRAIIMAPTRELAVQIYNDAESMSASTGLKLGLAYGGEGYDKQLAVLEQGVDILIGTTGRIIDYFKSKVIDLSNIQVVVLDEADRMFDLGFIKDIRFLFRRMPPATERLSMLFSATLSLRVQELAYEHMNHPEHVQIEPEQMTGVRIKEELFYPSNEDKMLLLLSLMEEEWPEKAIVFANTKHVCEDVHAWLENDGHRVGLLTGDVPQKKRMKILEDFTKGTVDILVATDVAARGLHIPDVTHVFNYDLPDDAEDYVHRIGRTGRAGKSGHSISLACEDYAFNLPAIEEYIHHPIPVSKYDREALLDDVTAPKRVFRNRQPVNRNMRDRQGGGNSNNRRRPPRKS</sequence>